<evidence type="ECO:0000250" key="1">
    <source>
        <dbReference type="UniProtKB" id="A0A0B0QJR1"/>
    </source>
</evidence>
<evidence type="ECO:0000250" key="2">
    <source>
        <dbReference type="UniProtKB" id="Q8ECH6"/>
    </source>
</evidence>
<evidence type="ECO:0000305" key="3"/>
<reference key="1">
    <citation type="journal article" date="1997" name="Nature">
        <title>The complete genome sequence of the hyperthermophilic, sulphate-reducing archaeon Archaeoglobus fulgidus.</title>
        <authorList>
            <person name="Klenk H.-P."/>
            <person name="Clayton R.A."/>
            <person name="Tomb J.-F."/>
            <person name="White O."/>
            <person name="Nelson K.E."/>
            <person name="Ketchum K.A."/>
            <person name="Dodson R.J."/>
            <person name="Gwinn M.L."/>
            <person name="Hickey E.K."/>
            <person name="Peterson J.D."/>
            <person name="Richardson D.L."/>
            <person name="Kerlavage A.R."/>
            <person name="Graham D.E."/>
            <person name="Kyrpides N.C."/>
            <person name="Fleischmann R.D."/>
            <person name="Quackenbush J."/>
            <person name="Lee N.H."/>
            <person name="Sutton G.G."/>
            <person name="Gill S.R."/>
            <person name="Kirkness E.F."/>
            <person name="Dougherty B.A."/>
            <person name="McKenney K."/>
            <person name="Adams M.D."/>
            <person name="Loftus B.J."/>
            <person name="Peterson S.N."/>
            <person name="Reich C.I."/>
            <person name="McNeil L.K."/>
            <person name="Badger J.H."/>
            <person name="Glodek A."/>
            <person name="Zhou L."/>
            <person name="Overbeek R."/>
            <person name="Gocayne J.D."/>
            <person name="Weidman J.F."/>
            <person name="McDonald L.A."/>
            <person name="Utterback T.R."/>
            <person name="Cotton M.D."/>
            <person name="Spriggs T."/>
            <person name="Artiach P."/>
            <person name="Kaine B.P."/>
            <person name="Sykes S.M."/>
            <person name="Sadow P.W."/>
            <person name="D'Andrea K.P."/>
            <person name="Bowman C."/>
            <person name="Fujii C."/>
            <person name="Garland S.A."/>
            <person name="Mason T.M."/>
            <person name="Olsen G.J."/>
            <person name="Fraser C.M."/>
            <person name="Smith H.O."/>
            <person name="Woese C.R."/>
            <person name="Venter J.C."/>
        </authorList>
    </citation>
    <scope>NUCLEOTIDE SEQUENCE [LARGE SCALE GENOMIC DNA]</scope>
    <source>
        <strain>ATCC 49558 / DSM 4304 / JCM 9628 / NBRC 100126 / VC-16</strain>
    </source>
</reference>
<accession>O29315</accession>
<comment type="function">
    <text evidence="2">Probable toxic component of a putative type VII toxin-antitoxin (TA) system, probably an RNase. Probably neutralized by cognate antitoxin AF_0948. Neutralization may be due to AMPylation by AF_0948.</text>
</comment>
<comment type="subunit">
    <text evidence="2">Homodimer, probably forms a complex with cognate antitoxin AF_0948.</text>
</comment>
<comment type="PTM">
    <text evidence="1">Modified by cognate antitoxin AF_0948; probably at least 2 successive AMPylation events occur on Tyr-98.</text>
</comment>
<comment type="similarity">
    <text evidence="3">Belongs to the HepT RNase toxin family.</text>
</comment>
<proteinExistence type="inferred from homology"/>
<feature type="chain" id="PRO_0000158266" description="Putative RNase AF_0947">
    <location>
        <begin position="1"/>
        <end position="132"/>
    </location>
</feature>
<feature type="short sequence motif" description="RX(4)HXY motif" evidence="1">
    <location>
        <begin position="91"/>
        <end position="98"/>
    </location>
</feature>
<feature type="active site" evidence="1">
    <location>
        <position position="91"/>
    </location>
</feature>
<feature type="active site" evidence="1">
    <location>
        <position position="96"/>
    </location>
</feature>
<feature type="modified residue" description="O-di-AMP-tyrosine" evidence="1">
    <location>
        <position position="98"/>
    </location>
</feature>
<protein>
    <recommendedName>
        <fullName>Putative RNase AF_0947</fullName>
        <ecNumber evidence="2">3.1.-.-</ecNumber>
    </recommendedName>
    <alternativeName>
        <fullName>Putative toxin AF_0947</fullName>
    </alternativeName>
</protein>
<gene>
    <name type="ordered locus">AF_0947</name>
</gene>
<keyword id="KW-0378">Hydrolase</keyword>
<keyword id="KW-0540">Nuclease</keyword>
<keyword id="KW-0547">Nucleotide-binding</keyword>
<keyword id="KW-0597">Phosphoprotein</keyword>
<keyword id="KW-1185">Reference proteome</keyword>
<keyword id="KW-1277">Toxin-antitoxin system</keyword>
<dbReference type="EC" id="3.1.-.-" evidence="2"/>
<dbReference type="EMBL" id="AE000782">
    <property type="protein sequence ID" value="AAB90296.1"/>
    <property type="molecule type" value="Genomic_DNA"/>
</dbReference>
<dbReference type="PIR" id="C69368">
    <property type="entry name" value="C69368"/>
</dbReference>
<dbReference type="RefSeq" id="WP_010878447.1">
    <property type="nucleotide sequence ID" value="NC_000917.1"/>
</dbReference>
<dbReference type="SMR" id="O29315"/>
<dbReference type="STRING" id="224325.AF_0947"/>
<dbReference type="PaxDb" id="224325-AF_0947"/>
<dbReference type="EnsemblBacteria" id="AAB90296">
    <property type="protein sequence ID" value="AAB90296"/>
    <property type="gene ID" value="AF_0947"/>
</dbReference>
<dbReference type="GeneID" id="1484170"/>
<dbReference type="KEGG" id="afu:AF_0947"/>
<dbReference type="eggNOG" id="arCOG02109">
    <property type="taxonomic scope" value="Archaea"/>
</dbReference>
<dbReference type="HOGENOM" id="CLU_152343_0_0_2"/>
<dbReference type="OrthoDB" id="105549at2157"/>
<dbReference type="PhylomeDB" id="O29315"/>
<dbReference type="Proteomes" id="UP000002199">
    <property type="component" value="Chromosome"/>
</dbReference>
<dbReference type="GO" id="GO:0110001">
    <property type="term" value="C:toxin-antitoxin complex"/>
    <property type="evidence" value="ECO:0007669"/>
    <property type="project" value="InterPro"/>
</dbReference>
<dbReference type="GO" id="GO:0000166">
    <property type="term" value="F:nucleotide binding"/>
    <property type="evidence" value="ECO:0007669"/>
    <property type="project" value="UniProtKB-KW"/>
</dbReference>
<dbReference type="GO" id="GO:0004540">
    <property type="term" value="F:RNA nuclease activity"/>
    <property type="evidence" value="ECO:0007669"/>
    <property type="project" value="InterPro"/>
</dbReference>
<dbReference type="Gene3D" id="1.20.120.580">
    <property type="entry name" value="bsu32300-like"/>
    <property type="match status" value="1"/>
</dbReference>
<dbReference type="InterPro" id="IPR008201">
    <property type="entry name" value="HepT-like"/>
</dbReference>
<dbReference type="InterPro" id="IPR037038">
    <property type="entry name" value="HepT-like_sf"/>
</dbReference>
<dbReference type="InterPro" id="IPR052379">
    <property type="entry name" value="Type_VII_TA_RNase"/>
</dbReference>
<dbReference type="PANTHER" id="PTHR33397:SF5">
    <property type="entry name" value="RNASE YUTE-RELATED"/>
    <property type="match status" value="1"/>
</dbReference>
<dbReference type="PANTHER" id="PTHR33397">
    <property type="entry name" value="UPF0331 PROTEIN YUTE"/>
    <property type="match status" value="1"/>
</dbReference>
<dbReference type="Pfam" id="PF01934">
    <property type="entry name" value="HepT-like"/>
    <property type="match status" value="1"/>
</dbReference>
<name>Y947_ARCFU</name>
<sequence length="132" mass="15408">MRRRRYLEKLEWVEREINFATEHAMSDEVRKRAVLYSIMTAVEVVMDIVAMLVKDLGKQVEDDYTNISKLLEECVIEESEAELLRRYNGLRNAIAHHYNHLDLSKVERALTQLDELYEVAVKLVKTADKLAG</sequence>
<organism>
    <name type="scientific">Archaeoglobus fulgidus (strain ATCC 49558 / DSM 4304 / JCM 9628 / NBRC 100126 / VC-16)</name>
    <dbReference type="NCBI Taxonomy" id="224325"/>
    <lineage>
        <taxon>Archaea</taxon>
        <taxon>Methanobacteriati</taxon>
        <taxon>Methanobacteriota</taxon>
        <taxon>Archaeoglobi</taxon>
        <taxon>Archaeoglobales</taxon>
        <taxon>Archaeoglobaceae</taxon>
        <taxon>Archaeoglobus</taxon>
    </lineage>
</organism>